<protein>
    <recommendedName>
        <fullName evidence="1">Ubiquinone biosynthesis protein COQ4 homolog, mitochondrial</fullName>
    </recommendedName>
    <alternativeName>
        <fullName>4-hydroxy-3-methoxy-5-polyprenylbenzoate decarboxylase</fullName>
        <ecNumber evidence="1">4.1.1.130</ecNumber>
    </alternativeName>
    <alternativeName>
        <fullName evidence="1">Coenzyme Q biosynthesis protein 4 homolog</fullName>
    </alternativeName>
</protein>
<keyword id="KW-0456">Lyase</keyword>
<keyword id="KW-0472">Membrane</keyword>
<keyword id="KW-0479">Metal-binding</keyword>
<keyword id="KW-0496">Mitochondrion</keyword>
<keyword id="KW-0999">Mitochondrion inner membrane</keyword>
<keyword id="KW-1185">Reference proteome</keyword>
<keyword id="KW-0809">Transit peptide</keyword>
<keyword id="KW-0831">Ubiquinone biosynthesis</keyword>
<keyword id="KW-0862">Zinc</keyword>
<name>COQ4_XENTR</name>
<dbReference type="EC" id="4.1.1.130" evidence="1"/>
<dbReference type="EMBL" id="CR926300">
    <property type="protein sequence ID" value="CAJ81453.1"/>
    <property type="molecule type" value="mRNA"/>
</dbReference>
<dbReference type="EMBL" id="BC161730">
    <property type="protein sequence ID" value="AAI61730.1"/>
    <property type="molecule type" value="mRNA"/>
</dbReference>
<dbReference type="EMBL" id="BC171035">
    <property type="protein sequence ID" value="AAI71035.1"/>
    <property type="molecule type" value="mRNA"/>
</dbReference>
<dbReference type="RefSeq" id="NP_001016225.1">
    <property type="nucleotide sequence ID" value="NM_001016225.1"/>
</dbReference>
<dbReference type="SMR" id="Q28CM7"/>
<dbReference type="FunCoup" id="Q28CM7">
    <property type="interactions" value="288"/>
</dbReference>
<dbReference type="STRING" id="8364.ENSXETP00000009781"/>
<dbReference type="PaxDb" id="8364-ENSXETP00000008596"/>
<dbReference type="GeneID" id="548979"/>
<dbReference type="KEGG" id="xtr:548979"/>
<dbReference type="AGR" id="Xenbase:XB-GENE-5888837"/>
<dbReference type="CTD" id="51117"/>
<dbReference type="Xenbase" id="XB-GENE-5888837">
    <property type="gene designation" value="coq4"/>
</dbReference>
<dbReference type="eggNOG" id="KOG3244">
    <property type="taxonomic scope" value="Eukaryota"/>
</dbReference>
<dbReference type="HOGENOM" id="CLU_061241_0_0_1"/>
<dbReference type="InParanoid" id="Q28CM7"/>
<dbReference type="OrthoDB" id="4249at2759"/>
<dbReference type="Reactome" id="R-XTR-2142789">
    <property type="pathway name" value="Ubiquinol biosynthesis"/>
</dbReference>
<dbReference type="UniPathway" id="UPA00232"/>
<dbReference type="Proteomes" id="UP000008143">
    <property type="component" value="Chromosome 8"/>
</dbReference>
<dbReference type="GO" id="GO:0031314">
    <property type="term" value="C:extrinsic component of mitochondrial inner membrane"/>
    <property type="evidence" value="ECO:0007669"/>
    <property type="project" value="UniProtKB-UniRule"/>
</dbReference>
<dbReference type="GO" id="GO:0120539">
    <property type="term" value="F:4-hydroxy-3-methoxy-5-polyprenylbenzoate decarboxylase activity"/>
    <property type="evidence" value="ECO:0000250"/>
    <property type="project" value="UniProtKB"/>
</dbReference>
<dbReference type="GO" id="GO:0006744">
    <property type="term" value="P:ubiquinone biosynthetic process"/>
    <property type="evidence" value="ECO:0000250"/>
    <property type="project" value="UniProtKB"/>
</dbReference>
<dbReference type="HAMAP" id="MF_03111">
    <property type="entry name" value="Coq4"/>
    <property type="match status" value="1"/>
</dbReference>
<dbReference type="InterPro" id="IPR007715">
    <property type="entry name" value="Coq4"/>
</dbReference>
<dbReference type="InterPro" id="IPR027540">
    <property type="entry name" value="Coq4_euk"/>
</dbReference>
<dbReference type="PANTHER" id="PTHR12922">
    <property type="entry name" value="UBIQUINONE BIOSYNTHESIS PROTEIN"/>
    <property type="match status" value="1"/>
</dbReference>
<dbReference type="PANTHER" id="PTHR12922:SF7">
    <property type="entry name" value="UBIQUINONE BIOSYNTHESIS PROTEIN COQ4 HOMOLOG, MITOCHONDRIAL"/>
    <property type="match status" value="1"/>
</dbReference>
<dbReference type="Pfam" id="PF05019">
    <property type="entry name" value="Coq4"/>
    <property type="match status" value="1"/>
</dbReference>
<sequence>MSGLLRYLHCSPAWRVLRPAAPGMQGGRFRSNYAAEEGIEEEIQFAAARQEDPSSLYSDHIPTNAVQKLLLSAGSAVMALYDPYRHDMVAVLGETTGAVALRKLRDQMRRDPEGLQILQERPRIRMSTLDFQTLREMPDGTFGREYARFLDVNHVTPDTRMPVKFVDDEELAYVAQRYREVHDLMHTLLGMPTNMLGEVVVKWFEAVQTGLPMCILGAAFGPLRLNNKRMKKLGVLVPWAVQSGRNARCVLNFYYEKRWGQSVASLREEIGILPPPEIKA</sequence>
<gene>
    <name type="primary">coq4</name>
    <name type="ORF">TEgg106n15.1</name>
</gene>
<evidence type="ECO:0000255" key="1">
    <source>
        <dbReference type="HAMAP-Rule" id="MF_03111"/>
    </source>
</evidence>
<evidence type="ECO:0000305" key="2"/>
<organism>
    <name type="scientific">Xenopus tropicalis</name>
    <name type="common">Western clawed frog</name>
    <name type="synonym">Silurana tropicalis</name>
    <dbReference type="NCBI Taxonomy" id="8364"/>
    <lineage>
        <taxon>Eukaryota</taxon>
        <taxon>Metazoa</taxon>
        <taxon>Chordata</taxon>
        <taxon>Craniata</taxon>
        <taxon>Vertebrata</taxon>
        <taxon>Euteleostomi</taxon>
        <taxon>Amphibia</taxon>
        <taxon>Batrachia</taxon>
        <taxon>Anura</taxon>
        <taxon>Pipoidea</taxon>
        <taxon>Pipidae</taxon>
        <taxon>Xenopodinae</taxon>
        <taxon>Xenopus</taxon>
        <taxon>Silurana</taxon>
    </lineage>
</organism>
<reference key="1">
    <citation type="submission" date="2006-10" db="EMBL/GenBank/DDBJ databases">
        <authorList>
            <consortium name="Sanger Xenopus tropicalis EST/cDNA project"/>
        </authorList>
    </citation>
    <scope>NUCLEOTIDE SEQUENCE [LARGE SCALE MRNA]</scope>
    <source>
        <tissue>Egg</tissue>
        <tissue>Eye</tissue>
        <tissue>Gastrula</tissue>
    </source>
</reference>
<feature type="transit peptide" description="Mitochondrion" evidence="1">
    <location>
        <begin position="1"/>
        <end position="15"/>
    </location>
</feature>
<feature type="chain" id="PRO_0000388055" description="Ubiquinone biosynthesis protein COQ4 homolog, mitochondrial">
    <location>
        <begin position="16"/>
        <end position="280"/>
    </location>
</feature>
<feature type="binding site" evidence="1">
    <location>
        <position position="182"/>
    </location>
    <ligand>
        <name>Zn(2+)</name>
        <dbReference type="ChEBI" id="CHEBI:29105"/>
    </ligand>
</feature>
<feature type="binding site" evidence="1">
    <location>
        <position position="183"/>
    </location>
    <ligand>
        <name>Zn(2+)</name>
        <dbReference type="ChEBI" id="CHEBI:29105"/>
    </ligand>
</feature>
<feature type="binding site" evidence="1">
    <location>
        <position position="186"/>
    </location>
    <ligand>
        <name>Zn(2+)</name>
        <dbReference type="ChEBI" id="CHEBI:29105"/>
    </ligand>
</feature>
<feature type="binding site" evidence="1">
    <location>
        <position position="198"/>
    </location>
    <ligand>
        <name>Zn(2+)</name>
        <dbReference type="ChEBI" id="CHEBI:29105"/>
    </ligand>
</feature>
<feature type="sequence conflict" description="In Ref. 1; AAI71035." evidence="2" ref="1">
    <original>G</original>
    <variation>V</variation>
    <location>
        <position position="3"/>
    </location>
</feature>
<feature type="sequence conflict" description="In Ref. 1; AAI71035." evidence="2" ref="1">
    <original>Q</original>
    <variation>QA</variation>
    <location>
        <position position="25"/>
    </location>
</feature>
<feature type="sequence conflict" description="In Ref. 1; AAI61730." evidence="2" ref="1">
    <original>G</original>
    <variation>AS</variation>
    <location>
        <position position="26"/>
    </location>
</feature>
<comment type="function">
    <text evidence="1">Lyase that catalyzes the C1-decarboxylation of 4-hydroxy-3-methoxy-5-(all-trans-polyprenyl)benzoic acid into 2-methoxy-6-(all-trans-polyprenyl)phenol during ubiquinone biosynthesis.</text>
</comment>
<comment type="catalytic activity">
    <reaction evidence="1">
        <text>a 4-hydroxy-3-methoxy-5-(all-trans-polyprenyl)benzoate + H(+) = a 2-methoxy-6-(all-trans-polyprenyl)phenol + CO2</text>
        <dbReference type="Rhea" id="RHEA:81179"/>
        <dbReference type="Rhea" id="RHEA-COMP:9551"/>
        <dbReference type="Rhea" id="RHEA-COMP:10931"/>
        <dbReference type="ChEBI" id="CHEBI:15378"/>
        <dbReference type="ChEBI" id="CHEBI:16526"/>
        <dbReference type="ChEBI" id="CHEBI:62731"/>
        <dbReference type="ChEBI" id="CHEBI:84443"/>
        <dbReference type="EC" id="4.1.1.130"/>
    </reaction>
</comment>
<comment type="cofactor">
    <cofactor evidence="1">
        <name>Zn(2+)</name>
        <dbReference type="ChEBI" id="CHEBI:29105"/>
    </cofactor>
</comment>
<comment type="pathway">
    <text evidence="1">Cofactor biosynthesis; ubiquinone biosynthesis.</text>
</comment>
<comment type="subunit">
    <text evidence="1">Component of a multi-subunit COQ enzyme complex, composed of at least coq3, coq4, coq5, coq6, coq7 and coq9.</text>
</comment>
<comment type="subcellular location">
    <subcellularLocation>
        <location evidence="1">Mitochondrion inner membrane</location>
        <topology evidence="1">Peripheral membrane protein</topology>
        <orientation evidence="1">Matrix side</orientation>
    </subcellularLocation>
</comment>
<comment type="similarity">
    <text evidence="1">Belongs to the COQ4 family.</text>
</comment>
<accession>Q28CM7</accession>
<accession>B1WBE9</accession>
<accession>B7ZTY2</accession>
<proteinExistence type="evidence at transcript level"/>